<organism>
    <name type="scientific">Homo sapiens</name>
    <name type="common">Human</name>
    <dbReference type="NCBI Taxonomy" id="9606"/>
    <lineage>
        <taxon>Eukaryota</taxon>
        <taxon>Metazoa</taxon>
        <taxon>Chordata</taxon>
        <taxon>Craniata</taxon>
        <taxon>Vertebrata</taxon>
        <taxon>Euteleostomi</taxon>
        <taxon>Mammalia</taxon>
        <taxon>Eutheria</taxon>
        <taxon>Euarchontoglires</taxon>
        <taxon>Primates</taxon>
        <taxon>Haplorrhini</taxon>
        <taxon>Catarrhini</taxon>
        <taxon>Hominidae</taxon>
        <taxon>Homo</taxon>
    </lineage>
</organism>
<protein>
    <recommendedName>
        <fullName evidence="27">E3 ubiquitin-protein ligase TRIM37</fullName>
        <ecNumber evidence="11 21">2.3.2.27</ecNumber>
    </recommendedName>
    <alternativeName>
        <fullName evidence="22">Mulibrey nanism protein</fullName>
    </alternativeName>
    <alternativeName>
        <fullName evidence="27">RING-type E3 ubiquitin transferase TRIM37</fullName>
    </alternativeName>
    <alternativeName>
        <fullName evidence="27">Tripartite motif-containing protein 37</fullName>
    </alternativeName>
</protein>
<dbReference type="EC" id="2.3.2.27" evidence="11 21"/>
<dbReference type="EMBL" id="AF213365">
    <property type="protein sequence ID" value="AAL36460.1"/>
    <property type="molecule type" value="mRNA"/>
</dbReference>
<dbReference type="EMBL" id="AB020705">
    <property type="protein sequence ID" value="BAA74921.1"/>
    <property type="status" value="ALT_INIT"/>
    <property type="molecule type" value="mRNA"/>
</dbReference>
<dbReference type="EMBL" id="AK289674">
    <property type="protein sequence ID" value="BAF82363.1"/>
    <property type="molecule type" value="mRNA"/>
</dbReference>
<dbReference type="EMBL" id="AK294850">
    <property type="protein sequence ID" value="BAG57954.1"/>
    <property type="molecule type" value="mRNA"/>
</dbReference>
<dbReference type="EMBL" id="AK292459">
    <property type="protein sequence ID" value="BAF85148.1"/>
    <property type="molecule type" value="mRNA"/>
</dbReference>
<dbReference type="EMBL" id="BX537955">
    <property type="protein sequence ID" value="CAD97922.1"/>
    <property type="molecule type" value="mRNA"/>
</dbReference>
<dbReference type="EMBL" id="AC005207">
    <property type="status" value="NOT_ANNOTATED_CDS"/>
    <property type="molecule type" value="Genomic_DNA"/>
</dbReference>
<dbReference type="EMBL" id="AC036154">
    <property type="status" value="NOT_ANNOTATED_CDS"/>
    <property type="molecule type" value="Genomic_DNA"/>
</dbReference>
<dbReference type="EMBL" id="AC099850">
    <property type="status" value="NOT_ANNOTATED_CDS"/>
    <property type="molecule type" value="Genomic_DNA"/>
</dbReference>
<dbReference type="EMBL" id="AC100832">
    <property type="status" value="NOT_ANNOTATED_CDS"/>
    <property type="molecule type" value="Genomic_DNA"/>
</dbReference>
<dbReference type="EMBL" id="CH471109">
    <property type="protein sequence ID" value="EAW94425.1"/>
    <property type="molecule type" value="Genomic_DNA"/>
</dbReference>
<dbReference type="EMBL" id="CH471109">
    <property type="protein sequence ID" value="EAW94426.1"/>
    <property type="molecule type" value="Genomic_DNA"/>
</dbReference>
<dbReference type="EMBL" id="BC036012">
    <property type="protein sequence ID" value="AAH36012.1"/>
    <property type="molecule type" value="mRNA"/>
</dbReference>
<dbReference type="CCDS" id="CCDS32694.1">
    <molecule id="O94972-1"/>
</dbReference>
<dbReference type="CCDS" id="CCDS45746.1">
    <molecule id="O94972-1"/>
</dbReference>
<dbReference type="CCDS" id="CCDS82174.1">
    <molecule id="O94972-3"/>
</dbReference>
<dbReference type="RefSeq" id="NP_001005207.1">
    <molecule id="O94972-1"/>
    <property type="nucleotide sequence ID" value="NM_001005207.5"/>
</dbReference>
<dbReference type="RefSeq" id="NP_001307916.1">
    <molecule id="O94972-3"/>
    <property type="nucleotide sequence ID" value="NM_001320987.3"/>
</dbReference>
<dbReference type="RefSeq" id="NP_001307919.1">
    <molecule id="O94972-2"/>
    <property type="nucleotide sequence ID" value="NM_001320990.3"/>
</dbReference>
<dbReference type="RefSeq" id="NP_056109.1">
    <molecule id="O94972-1"/>
    <property type="nucleotide sequence ID" value="NM_015294.6"/>
</dbReference>
<dbReference type="RefSeq" id="XP_047292070.1">
    <molecule id="O94972-3"/>
    <property type="nucleotide sequence ID" value="XM_047436114.1"/>
</dbReference>
<dbReference type="RefSeq" id="XP_054172191.1">
    <molecule id="O94972-3"/>
    <property type="nucleotide sequence ID" value="XM_054316216.1"/>
</dbReference>
<dbReference type="PDB" id="3LRQ">
    <property type="method" value="X-ray"/>
    <property type="resolution" value="2.29 A"/>
    <property type="chains" value="A/B/C/D=1-90"/>
</dbReference>
<dbReference type="PDBsum" id="3LRQ"/>
<dbReference type="SMR" id="O94972"/>
<dbReference type="BioGRID" id="110678">
    <property type="interactions" value="639"/>
</dbReference>
<dbReference type="DIP" id="DIP-34437N"/>
<dbReference type="FunCoup" id="O94972">
    <property type="interactions" value="2678"/>
</dbReference>
<dbReference type="IntAct" id="O94972">
    <property type="interactions" value="110"/>
</dbReference>
<dbReference type="MINT" id="O94972"/>
<dbReference type="STRING" id="9606.ENSP00000262294"/>
<dbReference type="GlyCosmos" id="O94972">
    <property type="glycosylation" value="1 site, 2 glycans"/>
</dbReference>
<dbReference type="GlyGen" id="O94972">
    <property type="glycosylation" value="5 sites, 2 O-linked glycans (1 site)"/>
</dbReference>
<dbReference type="iPTMnet" id="O94972"/>
<dbReference type="PhosphoSitePlus" id="O94972"/>
<dbReference type="BioMuta" id="TRIM37"/>
<dbReference type="jPOST" id="O94972"/>
<dbReference type="MassIVE" id="O94972"/>
<dbReference type="PaxDb" id="9606-ENSP00000262294"/>
<dbReference type="PeptideAtlas" id="O94972"/>
<dbReference type="ProteomicsDB" id="31814"/>
<dbReference type="ProteomicsDB" id="50590">
    <molecule id="O94972-1"/>
</dbReference>
<dbReference type="ProteomicsDB" id="50591">
    <molecule id="O94972-2"/>
</dbReference>
<dbReference type="Pumba" id="O94972"/>
<dbReference type="Antibodypedia" id="31047">
    <property type="antibodies" value="223 antibodies from 29 providers"/>
</dbReference>
<dbReference type="DNASU" id="4591"/>
<dbReference type="Ensembl" id="ENST00000262294.12">
    <molecule id="O94972-1"/>
    <property type="protein sequence ID" value="ENSP00000262294.7"/>
    <property type="gene ID" value="ENSG00000108395.14"/>
</dbReference>
<dbReference type="Ensembl" id="ENST00000393065.6">
    <molecule id="O94972-3"/>
    <property type="protein sequence ID" value="ENSP00000376784.2"/>
    <property type="gene ID" value="ENSG00000108395.14"/>
</dbReference>
<dbReference type="Ensembl" id="ENST00000393066.7">
    <molecule id="O94972-1"/>
    <property type="protein sequence ID" value="ENSP00000376785.3"/>
    <property type="gene ID" value="ENSG00000108395.14"/>
</dbReference>
<dbReference type="GeneID" id="4591"/>
<dbReference type="KEGG" id="hsa:4591"/>
<dbReference type="MANE-Select" id="ENST00000262294.12">
    <property type="protein sequence ID" value="ENSP00000262294.7"/>
    <property type="RefSeq nucleotide sequence ID" value="NM_015294.6"/>
    <property type="RefSeq protein sequence ID" value="NP_056109.1"/>
</dbReference>
<dbReference type="UCSC" id="uc002iwy.5">
    <molecule id="O94972-1"/>
    <property type="organism name" value="human"/>
</dbReference>
<dbReference type="UCSC" id="uc010woc.3">
    <property type="organism name" value="human"/>
</dbReference>
<dbReference type="AGR" id="HGNC:7523"/>
<dbReference type="CTD" id="4591"/>
<dbReference type="DisGeNET" id="4591"/>
<dbReference type="GeneCards" id="TRIM37"/>
<dbReference type="HGNC" id="HGNC:7523">
    <property type="gene designation" value="TRIM37"/>
</dbReference>
<dbReference type="HPA" id="ENSG00000108395">
    <property type="expression patterns" value="Tissue enhanced (testis)"/>
</dbReference>
<dbReference type="MalaCards" id="TRIM37"/>
<dbReference type="MIM" id="253250">
    <property type="type" value="phenotype"/>
</dbReference>
<dbReference type="MIM" id="605073">
    <property type="type" value="gene"/>
</dbReference>
<dbReference type="neXtProt" id="NX_O94972"/>
<dbReference type="OpenTargets" id="ENSG00000108395"/>
<dbReference type="Orphanet" id="2576">
    <property type="disease" value="Mulibrey nanism"/>
</dbReference>
<dbReference type="PharmGKB" id="PA35497"/>
<dbReference type="VEuPathDB" id="HostDB:ENSG00000108395"/>
<dbReference type="eggNOG" id="KOG2177">
    <property type="taxonomic scope" value="Eukaryota"/>
</dbReference>
<dbReference type="GeneTree" id="ENSGT00410000025800"/>
<dbReference type="HOGENOM" id="CLU_011183_0_0_1"/>
<dbReference type="InParanoid" id="O94972"/>
<dbReference type="OMA" id="XERNVEA"/>
<dbReference type="OrthoDB" id="192247at2759"/>
<dbReference type="PAN-GO" id="O94972">
    <property type="GO annotations" value="10 GO annotations based on evolutionary models"/>
</dbReference>
<dbReference type="PhylomeDB" id="O94972"/>
<dbReference type="TreeFam" id="TF351092"/>
<dbReference type="PathwayCommons" id="O94972"/>
<dbReference type="Reactome" id="R-HSA-983168">
    <property type="pathway name" value="Antigen processing: Ubiquitination &amp; Proteasome degradation"/>
</dbReference>
<dbReference type="SignaLink" id="O94972"/>
<dbReference type="SIGNOR" id="O94972"/>
<dbReference type="UniPathway" id="UPA00143"/>
<dbReference type="BioGRID-ORCS" id="4591">
    <property type="hits" value="263 hits in 1196 CRISPR screens"/>
</dbReference>
<dbReference type="ChiTaRS" id="TRIM37">
    <property type="organism name" value="human"/>
</dbReference>
<dbReference type="EvolutionaryTrace" id="O94972"/>
<dbReference type="GeneWiki" id="TRIM37"/>
<dbReference type="GenomeRNAi" id="4591"/>
<dbReference type="Pharos" id="O94972">
    <property type="development level" value="Tbio"/>
</dbReference>
<dbReference type="PRO" id="PR:O94972"/>
<dbReference type="Proteomes" id="UP000005640">
    <property type="component" value="Chromosome 17"/>
</dbReference>
<dbReference type="RNAct" id="O94972">
    <property type="molecule type" value="protein"/>
</dbReference>
<dbReference type="Bgee" id="ENSG00000108395">
    <property type="expression patterns" value="Expressed in endothelial cell and 205 other cell types or tissues"/>
</dbReference>
<dbReference type="ExpressionAtlas" id="O94972">
    <property type="expression patterns" value="baseline and differential"/>
</dbReference>
<dbReference type="GO" id="GO:0016235">
    <property type="term" value="C:aggresome"/>
    <property type="evidence" value="ECO:0000314"/>
    <property type="project" value="UniProtKB"/>
</dbReference>
<dbReference type="GO" id="GO:0005694">
    <property type="term" value="C:chromosome"/>
    <property type="evidence" value="ECO:0007669"/>
    <property type="project" value="UniProtKB-SubCell"/>
</dbReference>
<dbReference type="GO" id="GO:0005737">
    <property type="term" value="C:cytoplasm"/>
    <property type="evidence" value="ECO:0000314"/>
    <property type="project" value="UniProtKB"/>
</dbReference>
<dbReference type="GO" id="GO:0005829">
    <property type="term" value="C:cytosol"/>
    <property type="evidence" value="ECO:0000314"/>
    <property type="project" value="UniProtKB"/>
</dbReference>
<dbReference type="GO" id="GO:0035098">
    <property type="term" value="C:ESC/E(Z) complex"/>
    <property type="evidence" value="ECO:0000318"/>
    <property type="project" value="GO_Central"/>
</dbReference>
<dbReference type="GO" id="GO:0048471">
    <property type="term" value="C:perinuclear region of cytoplasm"/>
    <property type="evidence" value="ECO:0007669"/>
    <property type="project" value="UniProtKB-SubCell"/>
</dbReference>
<dbReference type="GO" id="GO:0005778">
    <property type="term" value="C:peroxisomal membrane"/>
    <property type="evidence" value="ECO:0000314"/>
    <property type="project" value="UniProtKB"/>
</dbReference>
<dbReference type="GO" id="GO:0005777">
    <property type="term" value="C:peroxisome"/>
    <property type="evidence" value="ECO:0000314"/>
    <property type="project" value="UniProtKB"/>
</dbReference>
<dbReference type="GO" id="GO:0003682">
    <property type="term" value="F:chromatin binding"/>
    <property type="evidence" value="ECO:0007669"/>
    <property type="project" value="Ensembl"/>
</dbReference>
<dbReference type="GO" id="GO:0140862">
    <property type="term" value="F:histone H2AK119 ubiquitin ligase activity"/>
    <property type="evidence" value="ECO:0000314"/>
    <property type="project" value="UniProtKB"/>
</dbReference>
<dbReference type="GO" id="GO:0042803">
    <property type="term" value="F:protein homodimerization activity"/>
    <property type="evidence" value="ECO:0000314"/>
    <property type="project" value="UniProtKB"/>
</dbReference>
<dbReference type="GO" id="GO:0003713">
    <property type="term" value="F:transcription coactivator activity"/>
    <property type="evidence" value="ECO:0000314"/>
    <property type="project" value="ARUK-UCL"/>
</dbReference>
<dbReference type="GO" id="GO:0005164">
    <property type="term" value="F:tumor necrosis factor receptor binding"/>
    <property type="evidence" value="ECO:0000353"/>
    <property type="project" value="UniProtKB"/>
</dbReference>
<dbReference type="GO" id="GO:0061630">
    <property type="term" value="F:ubiquitin protein ligase activity"/>
    <property type="evidence" value="ECO:0000314"/>
    <property type="project" value="UniProtKB"/>
</dbReference>
<dbReference type="GO" id="GO:0031625">
    <property type="term" value="F:ubiquitin protein ligase binding"/>
    <property type="evidence" value="ECO:0000353"/>
    <property type="project" value="UniProtKB"/>
</dbReference>
<dbReference type="GO" id="GO:0004842">
    <property type="term" value="F:ubiquitin-protein transferase activity"/>
    <property type="evidence" value="ECO:0000314"/>
    <property type="project" value="UniProtKB"/>
</dbReference>
<dbReference type="GO" id="GO:0008270">
    <property type="term" value="F:zinc ion binding"/>
    <property type="evidence" value="ECO:0007669"/>
    <property type="project" value="UniProtKB-KW"/>
</dbReference>
<dbReference type="GO" id="GO:0070842">
    <property type="term" value="P:aggresome assembly"/>
    <property type="evidence" value="ECO:0000314"/>
    <property type="project" value="UniProtKB"/>
</dbReference>
<dbReference type="GO" id="GO:0046600">
    <property type="term" value="P:negative regulation of centriole replication"/>
    <property type="evidence" value="ECO:0000315"/>
    <property type="project" value="UniProtKB"/>
</dbReference>
<dbReference type="GO" id="GO:0045814">
    <property type="term" value="P:negative regulation of gene expression, epigenetic"/>
    <property type="evidence" value="ECO:0000314"/>
    <property type="project" value="UniProtKB"/>
</dbReference>
<dbReference type="GO" id="GO:0032088">
    <property type="term" value="P:negative regulation of NF-kappaB transcription factor activity"/>
    <property type="evidence" value="ECO:0000314"/>
    <property type="project" value="UniProtKB"/>
</dbReference>
<dbReference type="GO" id="GO:0000122">
    <property type="term" value="P:negative regulation of transcription by RNA polymerase II"/>
    <property type="evidence" value="ECO:0000314"/>
    <property type="project" value="UniProtKB"/>
</dbReference>
<dbReference type="GO" id="GO:0051091">
    <property type="term" value="P:positive regulation of DNA-binding transcription factor activity"/>
    <property type="evidence" value="ECO:0000314"/>
    <property type="project" value="UniProtKB"/>
</dbReference>
<dbReference type="GO" id="GO:0051092">
    <property type="term" value="P:positive regulation of NF-kappaB transcription factor activity"/>
    <property type="evidence" value="ECO:0000314"/>
    <property type="project" value="UniProtKB"/>
</dbReference>
<dbReference type="GO" id="GO:0051865">
    <property type="term" value="P:protein autoubiquitination"/>
    <property type="evidence" value="ECO:0000314"/>
    <property type="project" value="UniProtKB"/>
</dbReference>
<dbReference type="GO" id="GO:0016558">
    <property type="term" value="P:protein import into peroxisome matrix"/>
    <property type="evidence" value="ECO:0000314"/>
    <property type="project" value="UniProtKB"/>
</dbReference>
<dbReference type="GO" id="GO:0006513">
    <property type="term" value="P:protein monoubiquitination"/>
    <property type="evidence" value="ECO:0000314"/>
    <property type="project" value="UniProt"/>
</dbReference>
<dbReference type="GO" id="GO:0050821">
    <property type="term" value="P:protein stabilization"/>
    <property type="evidence" value="ECO:0000314"/>
    <property type="project" value="UniProt"/>
</dbReference>
<dbReference type="CDD" id="cd19779">
    <property type="entry name" value="Bbox2_TRIM37_C-VIII"/>
    <property type="match status" value="1"/>
</dbReference>
<dbReference type="CDD" id="cd03773">
    <property type="entry name" value="MATH_TRIM37"/>
    <property type="match status" value="1"/>
</dbReference>
<dbReference type="CDD" id="cd16619">
    <property type="entry name" value="mRING-HC-C4C4_TRIM37_C-VIII"/>
    <property type="match status" value="1"/>
</dbReference>
<dbReference type="FunFam" id="2.60.210.10:FF:000008">
    <property type="entry name" value="E3 ubiquitin-protein ligase TRIM37 isoform X1"/>
    <property type="match status" value="1"/>
</dbReference>
<dbReference type="FunFam" id="3.30.160.60:FF:000332">
    <property type="entry name" value="E3 ubiquitin-protein ligase TRIM37 isoform X1"/>
    <property type="match status" value="1"/>
</dbReference>
<dbReference type="FunFam" id="3.30.40.10:FF:000279">
    <property type="entry name" value="E3 ubiquitin-protein ligase TRIM37 isoform X1"/>
    <property type="match status" value="1"/>
</dbReference>
<dbReference type="Gene3D" id="2.60.210.10">
    <property type="entry name" value="Apoptosis, Tumor Necrosis Factor Receptor Associated Protein 2, Chain A"/>
    <property type="match status" value="1"/>
</dbReference>
<dbReference type="Gene3D" id="3.30.160.60">
    <property type="entry name" value="Classic Zinc Finger"/>
    <property type="match status" value="1"/>
</dbReference>
<dbReference type="Gene3D" id="3.30.40.10">
    <property type="entry name" value="Zinc/RING finger domain, C3HC4 (zinc finger)"/>
    <property type="match status" value="1"/>
</dbReference>
<dbReference type="InterPro" id="IPR003649">
    <property type="entry name" value="Bbox_C"/>
</dbReference>
<dbReference type="InterPro" id="IPR002083">
    <property type="entry name" value="MATH/TRAF_dom"/>
</dbReference>
<dbReference type="InterPro" id="IPR008974">
    <property type="entry name" value="TRAF-like"/>
</dbReference>
<dbReference type="InterPro" id="IPR037299">
    <property type="entry name" value="TRIM37_MATH"/>
</dbReference>
<dbReference type="InterPro" id="IPR053003">
    <property type="entry name" value="TRIM_RBCC_E3_ubiq-ligases"/>
</dbReference>
<dbReference type="InterPro" id="IPR000315">
    <property type="entry name" value="Znf_B-box"/>
</dbReference>
<dbReference type="InterPro" id="IPR001841">
    <property type="entry name" value="Znf_RING"/>
</dbReference>
<dbReference type="InterPro" id="IPR013083">
    <property type="entry name" value="Znf_RING/FYVE/PHD"/>
</dbReference>
<dbReference type="PANTHER" id="PTHR36754">
    <property type="entry name" value="E3 UBIQUITIN-PROTEIN LIGASE TRIM37"/>
    <property type="match status" value="1"/>
</dbReference>
<dbReference type="PANTHER" id="PTHR36754:SF2">
    <property type="entry name" value="E3 UBIQUITIN-PROTEIN LIGASE TRIM37"/>
    <property type="match status" value="1"/>
</dbReference>
<dbReference type="Pfam" id="PF22486">
    <property type="entry name" value="MATH_2"/>
    <property type="match status" value="1"/>
</dbReference>
<dbReference type="Pfam" id="PF00643">
    <property type="entry name" value="zf-B_box"/>
    <property type="match status" value="1"/>
</dbReference>
<dbReference type="SMART" id="SM00502">
    <property type="entry name" value="BBC"/>
    <property type="match status" value="1"/>
</dbReference>
<dbReference type="SMART" id="SM00336">
    <property type="entry name" value="BBOX"/>
    <property type="match status" value="1"/>
</dbReference>
<dbReference type="SMART" id="SM00061">
    <property type="entry name" value="MATH"/>
    <property type="match status" value="1"/>
</dbReference>
<dbReference type="SUPFAM" id="SSF57845">
    <property type="entry name" value="B-box zinc-binding domain"/>
    <property type="match status" value="1"/>
</dbReference>
<dbReference type="SUPFAM" id="SSF57850">
    <property type="entry name" value="RING/U-box"/>
    <property type="match status" value="1"/>
</dbReference>
<dbReference type="SUPFAM" id="SSF49599">
    <property type="entry name" value="TRAF domain-like"/>
    <property type="match status" value="1"/>
</dbReference>
<dbReference type="PROSITE" id="PS50144">
    <property type="entry name" value="MATH"/>
    <property type="match status" value="1"/>
</dbReference>
<dbReference type="PROSITE" id="PS50119">
    <property type="entry name" value="ZF_BBOX"/>
    <property type="match status" value="1"/>
</dbReference>
<dbReference type="PROSITE" id="PS50089">
    <property type="entry name" value="ZF_RING_2"/>
    <property type="match status" value="1"/>
</dbReference>
<gene>
    <name evidence="26 28" type="primary">TRIM37</name>
    <name type="synonym">KIAA0898</name>
    <name evidence="22" type="synonym">MUL</name>
    <name evidence="23" type="synonym">POB1</name>
</gene>
<sequence length="964" mass="107906">MDEQSVESIAEVFRCFICMEKLRDARLCPHCSKLCCFSCIRRWLTEQRAQCPHCRAPLQLRELVNCRWAEEVTQQLDTLQLCSLTKHEENEKDKCENHHEKLSVFCWTCKKCICHQCALWGGMHGGHTFKPLAEIYEQHVTKVNEEVAKLRRRLMELISLVQEVERNVEAVRNAKDERVREIRNAVEMMIARLDTQLKNKLITLMGQKTSLTQETELLESLLQEVEHQLRSCSKSELISKSSEILMMFQQVHRKPMASFVTTPVPPDFTSELVPSYDSATFVLENFSTLRQRADPVYSPPLQVSGLCWRLKVYPDGNGVVRGYYLSVFLELSAGLPETSKYEYRVEMVHQSCNDPTKNIIREFASDFEVGECWGYNRFFRLDLLANEGYLNPQNDTVILRFQVRSPTFFQKSRDQHWYITQLEAAQTSYIQQINNLKERLTIELSRTQKSRDLSPPDNHLSPQNDDALETRAKKSACSDMLLEGGPTTASVREAKEDEEDEEKIQNEDYHHELSDGDLDLDLVYEDEVNQLDGSSSSASSTATSNTEENDIDEETMSGENDVEYNNMELEEGELMEDAAAAGPAGSSHGYVGSSSRISRRTHLCSAATSSLLDIDPLILIHLLDLKDRSSIENLWGLQPRPPASLLQPTASYSRKDKDQRKQQAMWRVPSDLKMLKRLKTQMAEVRCMKTDVKNTLSEIKSSSAASGDMQTSLFSADQAALAACGTENSGRLQDLGMELLAKSSVANCYIRNSTNKKSNSPKPARSSVAGSLSLRRAVDPGENSRSKGDCQTLSEGSPGSSQSGSRHSSPRALIHGSIGDILPKTEDRQCKALDSDAVVVAVFSGLPAVEKRRKMVTLGANAKGGHLEGLQMTDLENNSETGELQPVLPEGASAAPEEGMSSDSDIECDTENEEQEEHTSVGGFHDSFMVMTQPPDEDTHSSFPDGEQIGPEDLSFNTDENSGR</sequence>
<evidence type="ECO:0000255" key="1"/>
<evidence type="ECO:0000255" key="2">
    <source>
        <dbReference type="PROSITE-ProRule" id="PRU00024"/>
    </source>
</evidence>
<evidence type="ECO:0000255" key="3">
    <source>
        <dbReference type="PROSITE-ProRule" id="PRU00129"/>
    </source>
</evidence>
<evidence type="ECO:0000255" key="4">
    <source>
        <dbReference type="PROSITE-ProRule" id="PRU00175"/>
    </source>
</evidence>
<evidence type="ECO:0000256" key="5">
    <source>
        <dbReference type="SAM" id="MobiDB-lite"/>
    </source>
</evidence>
<evidence type="ECO:0000269" key="6">
    <source>
    </source>
</evidence>
<evidence type="ECO:0000269" key="7">
    <source>
    </source>
</evidence>
<evidence type="ECO:0000269" key="8">
    <source>
    </source>
</evidence>
<evidence type="ECO:0000269" key="9">
    <source>
    </source>
</evidence>
<evidence type="ECO:0000269" key="10">
    <source>
    </source>
</evidence>
<evidence type="ECO:0000269" key="11">
    <source>
    </source>
</evidence>
<evidence type="ECO:0000269" key="12">
    <source>
    </source>
</evidence>
<evidence type="ECO:0000269" key="13">
    <source>
    </source>
</evidence>
<evidence type="ECO:0000269" key="14">
    <source>
    </source>
</evidence>
<evidence type="ECO:0000269" key="15">
    <source>
    </source>
</evidence>
<evidence type="ECO:0000269" key="16">
    <source>
    </source>
</evidence>
<evidence type="ECO:0000269" key="17">
    <source>
    </source>
</evidence>
<evidence type="ECO:0000269" key="18">
    <source>
    </source>
</evidence>
<evidence type="ECO:0000269" key="19">
    <source>
    </source>
</evidence>
<evidence type="ECO:0000269" key="20">
    <source>
    </source>
</evidence>
<evidence type="ECO:0000269" key="21">
    <source>
    </source>
</evidence>
<evidence type="ECO:0000303" key="22">
    <source>
    </source>
</evidence>
<evidence type="ECO:0000303" key="23">
    <source>
    </source>
</evidence>
<evidence type="ECO:0000303" key="24">
    <source>
    </source>
</evidence>
<evidence type="ECO:0000303" key="25">
    <source>
    </source>
</evidence>
<evidence type="ECO:0000303" key="26">
    <source>
    </source>
</evidence>
<evidence type="ECO:0000305" key="27"/>
<evidence type="ECO:0000312" key="28">
    <source>
        <dbReference type="HGNC" id="HGNC:7523"/>
    </source>
</evidence>
<evidence type="ECO:0007744" key="29">
    <source>
    </source>
</evidence>
<evidence type="ECO:0007744" key="30">
    <source>
    </source>
</evidence>
<evidence type="ECO:0007829" key="31">
    <source>
        <dbReference type="PDB" id="3LRQ"/>
    </source>
</evidence>
<keyword id="KW-0002">3D-structure</keyword>
<keyword id="KW-0007">Acetylation</keyword>
<keyword id="KW-0025">Alternative splicing</keyword>
<keyword id="KW-0158">Chromosome</keyword>
<keyword id="KW-0175">Coiled coil</keyword>
<keyword id="KW-0963">Cytoplasm</keyword>
<keyword id="KW-0242">Dwarfism</keyword>
<keyword id="KW-0472">Membrane</keyword>
<keyword id="KW-0479">Metal-binding</keyword>
<keyword id="KW-0576">Peroxisome</keyword>
<keyword id="KW-0597">Phosphoprotein</keyword>
<keyword id="KW-1267">Proteomics identification</keyword>
<keyword id="KW-0656">Proto-oncogene</keyword>
<keyword id="KW-1185">Reference proteome</keyword>
<keyword id="KW-0678">Repressor</keyword>
<keyword id="KW-0804">Transcription</keyword>
<keyword id="KW-0808">Transferase</keyword>
<keyword id="KW-0832">Ubl conjugation</keyword>
<keyword id="KW-0833">Ubl conjugation pathway</keyword>
<keyword id="KW-0862">Zinc</keyword>
<keyword id="KW-0863">Zinc-finger</keyword>
<feature type="chain" id="PRO_0000056254" description="E3 ubiquitin-protein ligase TRIM37">
    <location>
        <begin position="1"/>
        <end position="964"/>
    </location>
</feature>
<feature type="domain" description="MATH" evidence="3">
    <location>
        <begin position="276"/>
        <end position="403"/>
    </location>
</feature>
<feature type="zinc finger region" description="RING-type; degenerate" evidence="4">
    <location>
        <begin position="15"/>
        <end position="55"/>
    </location>
</feature>
<feature type="zinc finger region" description="B box-type" evidence="2">
    <location>
        <begin position="90"/>
        <end position="132"/>
    </location>
</feature>
<feature type="region of interest" description="Disordered" evidence="5">
    <location>
        <begin position="477"/>
        <end position="513"/>
    </location>
</feature>
<feature type="region of interest" description="Disordered" evidence="5">
    <location>
        <begin position="530"/>
        <end position="554"/>
    </location>
</feature>
<feature type="region of interest" description="Disordered" evidence="5">
    <location>
        <begin position="640"/>
        <end position="663"/>
    </location>
</feature>
<feature type="region of interest" description="Disordered" evidence="5">
    <location>
        <begin position="752"/>
        <end position="812"/>
    </location>
</feature>
<feature type="region of interest" description="Disordered" evidence="5">
    <location>
        <begin position="891"/>
        <end position="964"/>
    </location>
</feature>
<feature type="coiled-coil region" evidence="1">
    <location>
        <begin position="132"/>
        <end position="234"/>
    </location>
</feature>
<feature type="coiled-coil region" evidence="1">
    <location>
        <begin position="419"/>
        <end position="450"/>
    </location>
</feature>
<feature type="coiled-coil region" evidence="1">
    <location>
        <begin position="673"/>
        <end position="700"/>
    </location>
</feature>
<feature type="compositionally biased region" description="Basic and acidic residues" evidence="5">
    <location>
        <begin position="503"/>
        <end position="513"/>
    </location>
</feature>
<feature type="compositionally biased region" description="Low complexity" evidence="5">
    <location>
        <begin position="534"/>
        <end position="544"/>
    </location>
</feature>
<feature type="compositionally biased region" description="Polar residues" evidence="5">
    <location>
        <begin position="752"/>
        <end position="761"/>
    </location>
</feature>
<feature type="compositionally biased region" description="Basic and acidic residues" evidence="5">
    <location>
        <begin position="776"/>
        <end position="788"/>
    </location>
</feature>
<feature type="compositionally biased region" description="Low complexity" evidence="5">
    <location>
        <begin position="794"/>
        <end position="807"/>
    </location>
</feature>
<feature type="compositionally biased region" description="Acidic residues" evidence="5">
    <location>
        <begin position="904"/>
        <end position="916"/>
    </location>
</feature>
<feature type="compositionally biased region" description="Polar residues" evidence="5">
    <location>
        <begin position="955"/>
        <end position="964"/>
    </location>
</feature>
<feature type="binding site" evidence="2">
    <location>
        <position position="95"/>
    </location>
    <ligand>
        <name>Zn(2+)</name>
        <dbReference type="ChEBI" id="CHEBI:29105"/>
    </ligand>
</feature>
<feature type="binding site" evidence="2">
    <location>
        <position position="98"/>
    </location>
    <ligand>
        <name>Zn(2+)</name>
        <dbReference type="ChEBI" id="CHEBI:29105"/>
    </ligand>
</feature>
<feature type="binding site" evidence="2">
    <location>
        <position position="117"/>
    </location>
    <ligand>
        <name>Zn(2+)</name>
        <dbReference type="ChEBI" id="CHEBI:29105"/>
    </ligand>
</feature>
<feature type="binding site" evidence="2">
    <location>
        <position position="124"/>
    </location>
    <ligand>
        <name>Zn(2+)</name>
        <dbReference type="ChEBI" id="CHEBI:29105"/>
    </ligand>
</feature>
<feature type="modified residue" description="N-acetylmethionine" evidence="29">
    <location>
        <position position="1"/>
    </location>
</feature>
<feature type="modified residue" description="Phosphoserine" evidence="30">
    <location>
        <position position="454"/>
    </location>
</feature>
<feature type="splice variant" id="VSP_011919" description="In isoform 2." evidence="25">
    <location>
        <begin position="1"/>
        <end position="122"/>
    </location>
</feature>
<feature type="splice variant" id="VSP_057468" description="In isoform 3.">
    <location>
        <begin position="8"/>
        <end position="41"/>
    </location>
</feature>
<feature type="splice variant" id="VSP_011920" description="In isoform 2." evidence="25">
    <location>
        <begin position="899"/>
        <end position="937"/>
    </location>
</feature>
<feature type="sequence variant" id="VAR_060217" description="In MUL; decreased ubiquitination and abolishes the formation of perinuclear aggregates; dbSNP:rs386834004." evidence="11">
    <original>L</original>
    <variation>P</variation>
    <location>
        <position position="76"/>
    </location>
</feature>
<feature type="sequence variant" id="VAR_060218" description="In dbSNP:rs17853504." evidence="10">
    <original>T</original>
    <variation>A</variation>
    <location>
        <position position="108"/>
    </location>
</feature>
<feature type="sequence variant" id="VAR_060219" description="In MUL; no effect on E3 ubiquitin-protein ligase activity; dbSNP:rs121908391." evidence="13">
    <original>C</original>
    <variation>S</variation>
    <location>
        <position position="109"/>
    </location>
</feature>
<feature type="sequence variant" id="VAR_060220" description="In MUL; no effect on ubiquitination but affects subcellular localization; dbSNP:rs386834009." evidence="9 11">
    <original>G</original>
    <variation>V</variation>
    <location>
        <position position="322"/>
    </location>
</feature>
<feature type="sequence variant" id="VAR_075470" description="In dbSNP:rs1458302547." evidence="20">
    <original>Q</original>
    <variation>R</variation>
    <location>
        <position position="432"/>
    </location>
</feature>
<feature type="sequence variant" id="VAR_052142" description="In dbSNP:rs7222388.">
    <original>V</original>
    <variation>I</variation>
    <location>
        <position position="838"/>
    </location>
</feature>
<feature type="mutagenesis site" description="Abolishes ability to monoubiquitinate 'Lys-119' of histone H2A (H2AK119Ub)." evidence="19">
    <original>C</original>
    <variation>R</variation>
    <location>
        <position position="18"/>
    </location>
</feature>
<feature type="mutagenesis site" description="Reduces ubiquitination and abolishes the formation of perinuclear aggregates." evidence="11">
    <original>CC</original>
    <variation>SS</variation>
    <location>
        <begin position="35"/>
        <end position="36"/>
    </location>
</feature>
<feature type="sequence conflict" description="In Ref. 3; BAF85148." evidence="27" ref="3">
    <original>I</original>
    <variation>M</variation>
    <location>
        <position position="620"/>
    </location>
</feature>
<feature type="sequence conflict" description="In Ref. 1; AAL36460." evidence="27" ref="1">
    <original>D</original>
    <variation>A</variation>
    <location>
        <position position="624"/>
    </location>
</feature>
<feature type="sequence conflict" description="In Ref. 2; BAG57954." evidence="27" ref="2">
    <original>E</original>
    <variation>G</variation>
    <location>
        <position position="916"/>
    </location>
</feature>
<feature type="helix" evidence="31">
    <location>
        <begin position="1"/>
        <end position="12"/>
    </location>
</feature>
<feature type="turn" evidence="31">
    <location>
        <begin position="16"/>
        <end position="18"/>
    </location>
</feature>
<feature type="strand" evidence="31">
    <location>
        <begin position="23"/>
        <end position="27"/>
    </location>
</feature>
<feature type="turn" evidence="31">
    <location>
        <begin position="29"/>
        <end position="31"/>
    </location>
</feature>
<feature type="strand" evidence="31">
    <location>
        <begin position="34"/>
        <end position="36"/>
    </location>
</feature>
<feature type="helix" evidence="31">
    <location>
        <begin position="37"/>
        <end position="46"/>
    </location>
</feature>
<feature type="turn" evidence="31">
    <location>
        <begin position="52"/>
        <end position="54"/>
    </location>
</feature>
<feature type="helix" evidence="31">
    <location>
        <begin position="60"/>
        <end position="62"/>
    </location>
</feature>
<feature type="helix" evidence="31">
    <location>
        <begin position="69"/>
        <end position="79"/>
    </location>
</feature>
<reference key="1">
    <citation type="submission" date="1999-12" db="EMBL/GenBank/DDBJ databases">
        <title>Gene POB1 is amplified and overexpressed in human breast cancer.</title>
        <authorList>
            <person name="Wu G."/>
            <person name="Couch F.J."/>
        </authorList>
    </citation>
    <scope>NUCLEOTIDE SEQUENCE [MRNA] (ISOFORM 1)</scope>
</reference>
<reference key="2">
    <citation type="journal article" date="1998" name="DNA Res.">
        <title>Prediction of the coding sequences of unidentified human genes. XII. The complete sequences of 100 new cDNA clones from brain which code for large proteins in vitro.</title>
        <authorList>
            <person name="Nagase T."/>
            <person name="Ishikawa K."/>
            <person name="Suyama M."/>
            <person name="Kikuno R."/>
            <person name="Hirosawa M."/>
            <person name="Miyajima N."/>
            <person name="Tanaka A."/>
            <person name="Kotani H."/>
            <person name="Nomura N."/>
            <person name="Ohara O."/>
        </authorList>
    </citation>
    <scope>NUCLEOTIDE SEQUENCE [LARGE SCALE MRNA] (ISOFORM 1)</scope>
    <source>
        <tissue>Brain</tissue>
    </source>
</reference>
<reference key="3">
    <citation type="journal article" date="2004" name="Nat. Genet.">
        <title>Complete sequencing and characterization of 21,243 full-length human cDNAs.</title>
        <authorList>
            <person name="Ota T."/>
            <person name="Suzuki Y."/>
            <person name="Nishikawa T."/>
            <person name="Otsuki T."/>
            <person name="Sugiyama T."/>
            <person name="Irie R."/>
            <person name="Wakamatsu A."/>
            <person name="Hayashi K."/>
            <person name="Sato H."/>
            <person name="Nagai K."/>
            <person name="Kimura K."/>
            <person name="Makita H."/>
            <person name="Sekine M."/>
            <person name="Obayashi M."/>
            <person name="Nishi T."/>
            <person name="Shibahara T."/>
            <person name="Tanaka T."/>
            <person name="Ishii S."/>
            <person name="Yamamoto J."/>
            <person name="Saito K."/>
            <person name="Kawai Y."/>
            <person name="Isono Y."/>
            <person name="Nakamura Y."/>
            <person name="Nagahari K."/>
            <person name="Murakami K."/>
            <person name="Yasuda T."/>
            <person name="Iwayanagi T."/>
            <person name="Wagatsuma M."/>
            <person name="Shiratori A."/>
            <person name="Sudo H."/>
            <person name="Hosoiri T."/>
            <person name="Kaku Y."/>
            <person name="Kodaira H."/>
            <person name="Kondo H."/>
            <person name="Sugawara M."/>
            <person name="Takahashi M."/>
            <person name="Kanda K."/>
            <person name="Yokoi T."/>
            <person name="Furuya T."/>
            <person name="Kikkawa E."/>
            <person name="Omura Y."/>
            <person name="Abe K."/>
            <person name="Kamihara K."/>
            <person name="Katsuta N."/>
            <person name="Sato K."/>
            <person name="Tanikawa M."/>
            <person name="Yamazaki M."/>
            <person name="Ninomiya K."/>
            <person name="Ishibashi T."/>
            <person name="Yamashita H."/>
            <person name="Murakawa K."/>
            <person name="Fujimori K."/>
            <person name="Tanai H."/>
            <person name="Kimata M."/>
            <person name="Watanabe M."/>
            <person name="Hiraoka S."/>
            <person name="Chiba Y."/>
            <person name="Ishida S."/>
            <person name="Ono Y."/>
            <person name="Takiguchi S."/>
            <person name="Watanabe S."/>
            <person name="Yosida M."/>
            <person name="Hotuta T."/>
            <person name="Kusano J."/>
            <person name="Kanehori K."/>
            <person name="Takahashi-Fujii A."/>
            <person name="Hara H."/>
            <person name="Tanase T.-O."/>
            <person name="Nomura Y."/>
            <person name="Togiya S."/>
            <person name="Komai F."/>
            <person name="Hara R."/>
            <person name="Takeuchi K."/>
            <person name="Arita M."/>
            <person name="Imose N."/>
            <person name="Musashino K."/>
            <person name="Yuuki H."/>
            <person name="Oshima A."/>
            <person name="Sasaki N."/>
            <person name="Aotsuka S."/>
            <person name="Yoshikawa Y."/>
            <person name="Matsunawa H."/>
            <person name="Ichihara T."/>
            <person name="Shiohata N."/>
            <person name="Sano S."/>
            <person name="Moriya S."/>
            <person name="Momiyama H."/>
            <person name="Satoh N."/>
            <person name="Takami S."/>
            <person name="Terashima Y."/>
            <person name="Suzuki O."/>
            <person name="Nakagawa S."/>
            <person name="Senoh A."/>
            <person name="Mizoguchi H."/>
            <person name="Goto Y."/>
            <person name="Shimizu F."/>
            <person name="Wakebe H."/>
            <person name="Hishigaki H."/>
            <person name="Watanabe T."/>
            <person name="Sugiyama A."/>
            <person name="Takemoto M."/>
            <person name="Kawakami B."/>
            <person name="Yamazaki M."/>
            <person name="Watanabe K."/>
            <person name="Kumagai A."/>
            <person name="Itakura S."/>
            <person name="Fukuzumi Y."/>
            <person name="Fujimori Y."/>
            <person name="Komiyama M."/>
            <person name="Tashiro H."/>
            <person name="Tanigami A."/>
            <person name="Fujiwara T."/>
            <person name="Ono T."/>
            <person name="Yamada K."/>
            <person name="Fujii Y."/>
            <person name="Ozaki K."/>
            <person name="Hirao M."/>
            <person name="Ohmori Y."/>
            <person name="Kawabata A."/>
            <person name="Hikiji T."/>
            <person name="Kobatake N."/>
            <person name="Inagaki H."/>
            <person name="Ikema Y."/>
            <person name="Okamoto S."/>
            <person name="Okitani R."/>
            <person name="Kawakami T."/>
            <person name="Noguchi S."/>
            <person name="Itoh T."/>
            <person name="Shigeta K."/>
            <person name="Senba T."/>
            <person name="Matsumura K."/>
            <person name="Nakajima Y."/>
            <person name="Mizuno T."/>
            <person name="Morinaga M."/>
            <person name="Sasaki M."/>
            <person name="Togashi T."/>
            <person name="Oyama M."/>
            <person name="Hata H."/>
            <person name="Watanabe M."/>
            <person name="Komatsu T."/>
            <person name="Mizushima-Sugano J."/>
            <person name="Satoh T."/>
            <person name="Shirai Y."/>
            <person name="Takahashi Y."/>
            <person name="Nakagawa K."/>
            <person name="Okumura K."/>
            <person name="Nagase T."/>
            <person name="Nomura N."/>
            <person name="Kikuchi H."/>
            <person name="Masuho Y."/>
            <person name="Yamashita R."/>
            <person name="Nakai K."/>
            <person name="Yada T."/>
            <person name="Nakamura Y."/>
            <person name="Ohara O."/>
            <person name="Isogai T."/>
            <person name="Sugano S."/>
        </authorList>
    </citation>
    <scope>NUCLEOTIDE SEQUENCE [LARGE SCALE MRNA] (ISOFORMS 1 AND 3)</scope>
    <source>
        <tissue>Testis</tissue>
    </source>
</reference>
<reference key="4">
    <citation type="journal article" date="2007" name="BMC Genomics">
        <title>The full-ORF clone resource of the German cDNA consortium.</title>
        <authorList>
            <person name="Bechtel S."/>
            <person name="Rosenfelder H."/>
            <person name="Duda A."/>
            <person name="Schmidt C.P."/>
            <person name="Ernst U."/>
            <person name="Wellenreuther R."/>
            <person name="Mehrle A."/>
            <person name="Schuster C."/>
            <person name="Bahr A."/>
            <person name="Bloecker H."/>
            <person name="Heubner D."/>
            <person name="Hoerlein A."/>
            <person name="Michel G."/>
            <person name="Wedler H."/>
            <person name="Koehrer K."/>
            <person name="Ottenwaelder B."/>
            <person name="Poustka A."/>
            <person name="Wiemann S."/>
            <person name="Schupp I."/>
        </authorList>
    </citation>
    <scope>NUCLEOTIDE SEQUENCE [LARGE SCALE MRNA] (ISOFORM 2)</scope>
    <source>
        <tissue>Testis</tissue>
    </source>
</reference>
<reference key="5">
    <citation type="journal article" date="2006" name="Nature">
        <title>DNA sequence of human chromosome 17 and analysis of rearrangement in the human lineage.</title>
        <authorList>
            <person name="Zody M.C."/>
            <person name="Garber M."/>
            <person name="Adams D.J."/>
            <person name="Sharpe T."/>
            <person name="Harrow J."/>
            <person name="Lupski J.R."/>
            <person name="Nicholson C."/>
            <person name="Searle S.M."/>
            <person name="Wilming L."/>
            <person name="Young S.K."/>
            <person name="Abouelleil A."/>
            <person name="Allen N.R."/>
            <person name="Bi W."/>
            <person name="Bloom T."/>
            <person name="Borowsky M.L."/>
            <person name="Bugalter B.E."/>
            <person name="Butler J."/>
            <person name="Chang J.L."/>
            <person name="Chen C.-K."/>
            <person name="Cook A."/>
            <person name="Corum B."/>
            <person name="Cuomo C.A."/>
            <person name="de Jong P.J."/>
            <person name="DeCaprio D."/>
            <person name="Dewar K."/>
            <person name="FitzGerald M."/>
            <person name="Gilbert J."/>
            <person name="Gibson R."/>
            <person name="Gnerre S."/>
            <person name="Goldstein S."/>
            <person name="Grafham D.V."/>
            <person name="Grocock R."/>
            <person name="Hafez N."/>
            <person name="Hagopian D.S."/>
            <person name="Hart E."/>
            <person name="Norman C.H."/>
            <person name="Humphray S."/>
            <person name="Jaffe D.B."/>
            <person name="Jones M."/>
            <person name="Kamal M."/>
            <person name="Khodiyar V.K."/>
            <person name="LaButti K."/>
            <person name="Laird G."/>
            <person name="Lehoczky J."/>
            <person name="Liu X."/>
            <person name="Lokyitsang T."/>
            <person name="Loveland J."/>
            <person name="Lui A."/>
            <person name="Macdonald P."/>
            <person name="Major J.E."/>
            <person name="Matthews L."/>
            <person name="Mauceli E."/>
            <person name="McCarroll S.A."/>
            <person name="Mihalev A.H."/>
            <person name="Mudge J."/>
            <person name="Nguyen C."/>
            <person name="Nicol R."/>
            <person name="O'Leary S.B."/>
            <person name="Osoegawa K."/>
            <person name="Schwartz D.C."/>
            <person name="Shaw-Smith C."/>
            <person name="Stankiewicz P."/>
            <person name="Steward C."/>
            <person name="Swarbreck D."/>
            <person name="Venkataraman V."/>
            <person name="Whittaker C.A."/>
            <person name="Yang X."/>
            <person name="Zimmer A.R."/>
            <person name="Bradley A."/>
            <person name="Hubbard T."/>
            <person name="Birren B.W."/>
            <person name="Rogers J."/>
            <person name="Lander E.S."/>
            <person name="Nusbaum C."/>
        </authorList>
    </citation>
    <scope>NUCLEOTIDE SEQUENCE [LARGE SCALE GENOMIC DNA]</scope>
</reference>
<reference key="6">
    <citation type="submission" date="2005-07" db="EMBL/GenBank/DDBJ databases">
        <authorList>
            <person name="Mural R.J."/>
            <person name="Istrail S."/>
            <person name="Sutton G.G."/>
            <person name="Florea L."/>
            <person name="Halpern A.L."/>
            <person name="Mobarry C.M."/>
            <person name="Lippert R."/>
            <person name="Walenz B."/>
            <person name="Shatkay H."/>
            <person name="Dew I."/>
            <person name="Miller J.R."/>
            <person name="Flanigan M.J."/>
            <person name="Edwards N.J."/>
            <person name="Bolanos R."/>
            <person name="Fasulo D."/>
            <person name="Halldorsson B.V."/>
            <person name="Hannenhalli S."/>
            <person name="Turner R."/>
            <person name="Yooseph S."/>
            <person name="Lu F."/>
            <person name="Nusskern D.R."/>
            <person name="Shue B.C."/>
            <person name="Zheng X.H."/>
            <person name="Zhong F."/>
            <person name="Delcher A.L."/>
            <person name="Huson D.H."/>
            <person name="Kravitz S.A."/>
            <person name="Mouchard L."/>
            <person name="Reinert K."/>
            <person name="Remington K.A."/>
            <person name="Clark A.G."/>
            <person name="Waterman M.S."/>
            <person name="Eichler E.E."/>
            <person name="Adams M.D."/>
            <person name="Hunkapiller M.W."/>
            <person name="Myers E.W."/>
            <person name="Venter J.C."/>
        </authorList>
    </citation>
    <scope>NUCLEOTIDE SEQUENCE [LARGE SCALE GENOMIC DNA]</scope>
</reference>
<reference key="7">
    <citation type="journal article" date="2004" name="Genome Res.">
        <title>The status, quality, and expansion of the NIH full-length cDNA project: the Mammalian Gene Collection (MGC).</title>
        <authorList>
            <consortium name="The MGC Project Team"/>
        </authorList>
    </citation>
    <scope>NUCLEOTIDE SEQUENCE [LARGE SCALE MRNA] (ISOFORM 1)</scope>
    <scope>VARIANT ALA-108</scope>
    <source>
        <tissue>Testis</tissue>
    </source>
</reference>
<reference key="8">
    <citation type="journal article" date="2000" name="Nat. Genet.">
        <title>Gene encoding a new RING-B-box-coiled-coil protein is mutated in mulibrey nanism.</title>
        <authorList>
            <person name="Avela K."/>
            <person name="Lipsanen-Nyman M."/>
            <person name="Idanheimo N."/>
            <person name="Seemanova E."/>
            <person name="Rosengren S."/>
            <person name="Makela T.P."/>
            <person name="Perheentupa J."/>
            <person name="Chapelle A.D."/>
            <person name="Lehesjoki A.E."/>
        </authorList>
    </citation>
    <scope>INVOLVEMENT IN MUL</scope>
    <scope>TISSUE SPECIFICITY</scope>
</reference>
<reference key="9">
    <citation type="journal article" date="2002" name="Am. J. Hum. Genet.">
        <title>The TRIM37 gene encodes a peroxisomal RING-B-box-coiled-coil protein: classification of mulibrey nanism as a new peroxisomal disorder.</title>
        <authorList>
            <person name="Kallijarvi J."/>
            <person name="Avela K."/>
            <person name="Lipsanen-Nyman M."/>
            <person name="Ulmanen I."/>
            <person name="Lehesjoki A.E."/>
        </authorList>
    </citation>
    <scope>SUBCELLULAR LOCATION</scope>
</reference>
<reference key="10">
    <citation type="journal article" date="2003" name="Hum. Mutat.">
        <title>A novel splice site mutation in the TRIM37 gene causes mulibrey nanism in a Turkish family with phenotypic heterogeneity.</title>
        <authorList>
            <person name="Jagiello P."/>
            <person name="Hammans C."/>
            <person name="Wieczorek S."/>
            <person name="Arning L."/>
            <person name="Stefanski A."/>
            <person name="Strehl H."/>
            <person name="Epplen J.T."/>
            <person name="Gencik M."/>
        </authorList>
    </citation>
    <scope>INVOLVEMENT IN MUL</scope>
</reference>
<reference key="11">
    <citation type="journal article" date="2005" name="Exp. Cell Res.">
        <title>TRIM37 defective in mulibrey nanism is a novel RING finger ubiquitin E3 ligase.</title>
        <authorList>
            <person name="Kallijaervi J."/>
            <person name="Lahtinen U."/>
            <person name="Haemaelaeinen R."/>
            <person name="Lipsanen-Nyman M."/>
            <person name="Palvimo J.J."/>
            <person name="Lehesjoki A.-E."/>
        </authorList>
    </citation>
    <scope>FUNCTION</scope>
    <scope>SUBCELLULAR LOCATION</scope>
    <scope>AUTOUBIQUITINATION</scope>
    <scope>MUTAGENESIS OF 35-CYS-CYS-36</scope>
    <scope>PATHWAY</scope>
    <scope>VARIANT MUL PRO-76</scope>
    <scope>CHARACTERIZATION OF VARIANTS MUL PRO-76 AND MUL VAL-322</scope>
</reference>
<reference key="12">
    <citation type="journal article" date="2006" name="Gene">
        <title>Characterisation of the mulibrey nanism-associated TRIM37 gene: transcription initiation, promoter region and alternative splicing.</title>
        <authorList>
            <person name="Hamalainen R.H."/>
            <person name="Joensuu T."/>
            <person name="Kallijarvi J."/>
            <person name="Lehesjoki A.E."/>
        </authorList>
    </citation>
    <scope>TISSUE SPECIFICITY</scope>
</reference>
<reference key="13">
    <citation type="journal article" date="2007" name="Clin. Dysmorphol.">
        <title>A novel mutation in TRIM37 is associated with mulibrey nanism in a Turkish boy.</title>
        <authorList>
            <person name="Doganc T."/>
            <person name="Yuksel Konuk B.E."/>
            <person name="Alpan N."/>
            <person name="Konuk O."/>
            <person name="Hamalainen R.H."/>
            <person name="Lehesjoki A.E."/>
            <person name="Tekin M."/>
        </authorList>
    </citation>
    <scope>INVOLVEMENT IN MUL</scope>
</reference>
<reference key="14">
    <citation type="journal article" date="2011" name="J. Clin. Endocrinol. Metab.">
        <title>Testicular failure and male infertility in the monogenic Mulibrey nanism disorder.</title>
        <authorList>
            <person name="Karlberg S."/>
            <person name="Toppari J."/>
            <person name="Karlberg N."/>
            <person name="Nurmio M."/>
            <person name="Karikoski R."/>
            <person name="Jalanko H."/>
            <person name="Lipsanen-Nyman M."/>
        </authorList>
    </citation>
    <scope>INVOLVEMENT IN MUL</scope>
</reference>
<reference key="15">
    <citation type="journal article" date="2012" name="Proc. Natl. Acad. Sci. U.S.A.">
        <title>N-terminal acetylome analyses and functional insights of the N-terminal acetyltransferase NatB.</title>
        <authorList>
            <person name="Van Damme P."/>
            <person name="Lasa M."/>
            <person name="Polevoda B."/>
            <person name="Gazquez C."/>
            <person name="Elosegui-Artola A."/>
            <person name="Kim D.S."/>
            <person name="De Juan-Pardo E."/>
            <person name="Demeyer K."/>
            <person name="Hole K."/>
            <person name="Larrea E."/>
            <person name="Timmerman E."/>
            <person name="Prieto J."/>
            <person name="Arnesen T."/>
            <person name="Sherman F."/>
            <person name="Gevaert K."/>
            <person name="Aldabe R."/>
        </authorList>
    </citation>
    <scope>ACETYLATION [LARGE SCALE ANALYSIS] AT MET-1</scope>
    <scope>IDENTIFICATION BY MASS SPECTROMETRY [LARGE SCALE ANALYSIS]</scope>
</reference>
<reference key="16">
    <citation type="journal article" date="2013" name="Dev. Cell">
        <title>Discovering regulators of centriole biogenesis through siRNA-based functional genomics in human cells.</title>
        <authorList>
            <person name="Balestra F.R."/>
            <person name="Strnad P."/>
            <person name="Fluckiger I."/>
            <person name="Gonczy P."/>
        </authorList>
    </citation>
    <scope>FUNCTION</scope>
    <scope>SUBCELLULAR LOCATION</scope>
</reference>
<reference key="17">
    <citation type="journal article" date="2013" name="Eur. J. Pediatr.">
        <title>Refractory congestive heart failure following delayed pericardectomy in a 12-year-old child with Mulibrey nanism due to a novel mutation in TRIM37.</title>
        <authorList>
            <person name="Kumpf M."/>
            <person name="Hamalainen R.H."/>
            <person name="Hofbeck M."/>
            <person name="Baden W."/>
        </authorList>
    </citation>
    <scope>INVOLVEMENT IN MUL</scope>
</reference>
<reference key="18">
    <citation type="journal article" date="2013" name="J. Proteome Res.">
        <title>Toward a comprehensive characterization of a human cancer cell phosphoproteome.</title>
        <authorList>
            <person name="Zhou H."/>
            <person name="Di Palma S."/>
            <person name="Preisinger C."/>
            <person name="Peng M."/>
            <person name="Polat A.N."/>
            <person name="Heck A.J."/>
            <person name="Mohammed S."/>
        </authorList>
    </citation>
    <scope>PHOSPHORYLATION [LARGE SCALE ANALYSIS] AT SER-454</scope>
    <scope>IDENTIFICATION BY MASS SPECTROMETRY [LARGE SCALE ANALYSIS]</scope>
    <source>
        <tissue>Cervix carcinoma</tissue>
        <tissue>Erythroleukemia</tissue>
    </source>
</reference>
<reference key="19">
    <citation type="journal article" date="2014" name="J. Gen. Virol.">
        <title>Anti-HIV-1 activity of Trim 37.</title>
        <authorList>
            <person name="Tabah A.A."/>
            <person name="Tardif K."/>
            <person name="Mansky L.M."/>
        </authorList>
    </citation>
    <scope>FUNCTION</scope>
</reference>
<reference key="20">
    <citation type="journal article" date="2014" name="Nature">
        <title>TRIM37 is a new histone H2A ubiquitin ligase and breast cancer oncoprotein.</title>
        <authorList>
            <person name="Bhatnagar S."/>
            <person name="Gazin C."/>
            <person name="Chamberlain L."/>
            <person name="Ou J."/>
            <person name="Zhu X."/>
            <person name="Tushir J.S."/>
            <person name="Virbasius C.M."/>
            <person name="Lin L."/>
            <person name="Zhu L.J."/>
            <person name="Wajapeyee N."/>
            <person name="Green M.R."/>
        </authorList>
    </citation>
    <scope>FUNCTION</scope>
    <scope>PATHWAY</scope>
    <scope>SUBUNIT</scope>
    <scope>INDUCTION</scope>
    <scope>MUTAGENESIS OF CYS-18</scope>
</reference>
<reference key="21">
    <citation type="journal article" date="2017" name="J. Cell Biol.">
        <title>TRIM37, a novel E3 ligase for PEX5-mediated peroxisomal matrix protein import.</title>
        <authorList>
            <person name="Wang W."/>
            <person name="Xia Z.J."/>
            <person name="Farre J.C."/>
            <person name="Subramani S."/>
        </authorList>
    </citation>
    <scope>FUNCTION</scope>
    <scope>CATALYTIC ACTIVITY</scope>
    <scope>PATHWAY</scope>
    <scope>SUBCELLULAR LOCATION</scope>
</reference>
<reference key="22">
    <citation type="submission" date="2010-03" db="PDB data bank">
        <title>E3 ubiquitin-protein ligase ring domain from human hr4604d.</title>
        <authorList>
            <consortium name="Northeast structural genomics consortium (NESG)"/>
        </authorList>
    </citation>
    <scope>X-RAY CRYSTALLOGRAPHY (2.29 ANGSTROMS) OF 1-90</scope>
</reference>
<reference key="23">
    <citation type="journal article" date="2004" name="Hum. Mutat.">
        <title>Novel mutations in the TRIM37 gene in Mulibrey Nanism.</title>
        <authorList>
            <person name="Haemaelaeinen R.H."/>
            <person name="Avela K."/>
            <person name="Lambert J.A."/>
            <person name="Kallijaervi J."/>
            <person name="Eyaid W."/>
            <person name="Gronau J."/>
            <person name="Ignaszewski A.P."/>
            <person name="McFadden D."/>
            <person name="Sorge G."/>
            <person name="Lipsanen-Nyman M."/>
            <person name="Lehesjoki A.E."/>
        </authorList>
    </citation>
    <scope>VARIANT MUL VAL-322</scope>
    <scope>CHARACTERIZATION OF VARIANT MUL VAR-322</scope>
</reference>
<reference key="24">
    <citation type="journal article" date="2006" name="Clin. Genet.">
        <title>Wilms' tumor and novel TRIM37 mutations in an Australian patient with mulibrey nanism.</title>
        <authorList>
            <person name="Haemaelaeinen R.H."/>
            <person name="Mowat D."/>
            <person name="Gabbett M.T."/>
            <person name="O'brien T.A."/>
            <person name="Kallijaervi J."/>
            <person name="Lehesjoki A.-E."/>
        </authorList>
    </citation>
    <scope>VARIANT MUL SER-109</scope>
    <scope>CHARACTERIZATION OF VARIANT MUL SER-109</scope>
</reference>
<reference key="25">
    <citation type="journal article" date="2016" name="Am. J. Med. Genet. A">
        <title>FTO variant associated with malformation syndrome.</title>
        <authorList>
            <person name="Rohena L."/>
            <person name="Lawson M."/>
            <person name="Guzman E."/>
            <person name="Ganapathi M."/>
            <person name="Cho M.T."/>
            <person name="Haverfield E."/>
            <person name="Anyane-Yeboa K."/>
        </authorList>
    </citation>
    <scope>VARIANT ARG-432</scope>
</reference>
<proteinExistence type="evidence at protein level"/>
<accession>O94972</accession>
<accession>A8K0V9</accession>
<accession>A8K8U4</accession>
<accession>A8MZ79</accession>
<accession>B4DGZ3</accession>
<accession>F8WEE6</accession>
<accession>Q7Z3E6</accession>
<accession>Q8IYF7</accession>
<accession>Q8WYF7</accession>
<comment type="function">
    <text evidence="11 17 18 19 21">E3 ubiquitin-protein ligase required to prevent centriole reduplication (PubMed:15885686, PubMed:23769972). Probably acts by ubiquitinating positive regulators of centriole reduplication (PubMed:23769972). Mediates monoubiquitination of 'Lys-119' of histone H2A (H2AK119Ub), a specific tag for epigenetic transcriptional repression: associates with some Polycomb group (PcG) multiprotein PRC2-like complex and mediates repression of target genes (PubMed:25470042). Also acts as a positive regulator of peroxisome import by mediating monoubiquitination of PEX5 at 'Lys-472': monoubiquitination promotes PEX5 stabilitation by preventing its polyubiquitination and degradation by the proteasome (PubMed:28724525). Has anti-HIV activity (PubMed:24317724).</text>
</comment>
<comment type="catalytic activity">
    <reaction evidence="11 21">
        <text>S-ubiquitinyl-[E2 ubiquitin-conjugating enzyme]-L-cysteine + [acceptor protein]-L-lysine = [E2 ubiquitin-conjugating enzyme]-L-cysteine + N(6)-ubiquitinyl-[acceptor protein]-L-lysine.</text>
        <dbReference type="EC" id="2.3.2.27"/>
    </reaction>
</comment>
<comment type="pathway">
    <text evidence="11 19 21">Protein modification; protein ubiquitination.</text>
</comment>
<comment type="subunit">
    <text evidence="19">Associates with the PRC2/EED-EZH2 complex.</text>
</comment>
<comment type="interaction">
    <interactant intactId="EBI-741602">
        <id>O94972</id>
    </interactant>
    <interactant intactId="EBI-745213">
        <id>P29972</id>
        <label>AQP1</label>
    </interactant>
    <organismsDiffer>false</organismsDiffer>
    <experiments>3</experiments>
</comment>
<comment type="interaction">
    <interactant intactId="EBI-741602">
        <id>O94972</id>
    </interactant>
    <interactant intactId="EBI-16429430">
        <id>A0A0S2Z4M1</id>
        <label>AXIN1</label>
    </interactant>
    <organismsDiffer>false</organismsDiffer>
    <experiments>3</experiments>
</comment>
<comment type="interaction">
    <interactant intactId="EBI-741602">
        <id>O94972</id>
    </interactant>
    <interactant intactId="EBI-710484">
        <id>O15169</id>
        <label>AXIN1</label>
    </interactant>
    <organismsDiffer>false</organismsDiffer>
    <experiments>3</experiments>
</comment>
<comment type="interaction">
    <interactant intactId="EBI-741602">
        <id>O94972</id>
    </interactant>
    <interactant intactId="EBI-358049">
        <id>Q13895</id>
        <label>BYSL</label>
    </interactant>
    <organismsDiffer>false</organismsDiffer>
    <experiments>9</experiments>
</comment>
<comment type="interaction">
    <interactant intactId="EBI-741602">
        <id>O94972</id>
    </interactant>
    <interactant intactId="EBI-10260504">
        <id>Q86Y33</id>
        <label>CDC20B</label>
    </interactant>
    <organismsDiffer>false</organismsDiffer>
    <experiments>3</experiments>
</comment>
<comment type="interaction">
    <interactant intactId="EBI-741602">
        <id>O94972</id>
    </interactant>
    <interactant intactId="EBI-11983537">
        <id>Q86Y33-5</id>
        <label>CDC20B</label>
    </interactant>
    <organismsDiffer>false</organismsDiffer>
    <experiments>3</experiments>
</comment>
<comment type="interaction">
    <interactant intactId="EBI-741602">
        <id>O94972</id>
    </interactant>
    <interactant intactId="EBI-374980">
        <id>O00311</id>
        <label>CDC7</label>
    </interactant>
    <organismsDiffer>false</organismsDiffer>
    <experiments>3</experiments>
</comment>
<comment type="interaction">
    <interactant intactId="EBI-741602">
        <id>O94972</id>
    </interactant>
    <interactant intactId="EBI-3919850">
        <id>Q8IVW4</id>
        <label>CDKL3</label>
    </interactant>
    <organismsDiffer>false</organismsDiffer>
    <experiments>3</experiments>
</comment>
<comment type="interaction">
    <interactant intactId="EBI-741602">
        <id>O94972</id>
    </interactant>
    <interactant intactId="EBI-359063">
        <id>P53618</id>
        <label>COPB1</label>
    </interactant>
    <organismsDiffer>false</organismsDiffer>
    <experiments>4</experiments>
</comment>
<comment type="interaction">
    <interactant intactId="EBI-741602">
        <id>O94972</id>
    </interactant>
    <interactant intactId="EBI-5453285">
        <id>Q2TBE0</id>
        <label>CWF19L2</label>
    </interactant>
    <organismsDiffer>false</organismsDiffer>
    <experiments>6</experiments>
</comment>
<comment type="interaction">
    <interactant intactId="EBI-741602">
        <id>O94972</id>
    </interactant>
    <interactant intactId="EBI-351257">
        <id>P26196</id>
        <label>DDX6</label>
    </interactant>
    <organismsDiffer>false</organismsDiffer>
    <experiments>3</experiments>
</comment>
<comment type="interaction">
    <interactant intactId="EBI-741602">
        <id>O94972</id>
    </interactant>
    <interactant intactId="EBI-529989">
        <id>Q9NRI5</id>
        <label>DISC1</label>
    </interactant>
    <organismsDiffer>false</organismsDiffer>
    <experiments>3</experiments>
</comment>
<comment type="interaction">
    <interactant intactId="EBI-741602">
        <id>O94972</id>
    </interactant>
    <interactant intactId="EBI-11984733">
        <id>O60941-5</id>
        <label>DTNB</label>
    </interactant>
    <organismsDiffer>false</organismsDiffer>
    <experiments>3</experiments>
</comment>
<comment type="interaction">
    <interactant intactId="EBI-741602">
        <id>O94972</id>
    </interactant>
    <interactant intactId="EBI-10264440">
        <id>Q8IYY4</id>
        <label>DZIP1L</label>
    </interactant>
    <organismsDiffer>false</organismsDiffer>
    <experiments>3</experiments>
</comment>
<comment type="interaction">
    <interactant intactId="EBI-741602">
        <id>O94972</id>
    </interactant>
    <interactant intactId="EBI-742350">
        <id>Q14241</id>
        <label>ELOA</label>
    </interactant>
    <organismsDiffer>false</organismsDiffer>
    <experiments>3</experiments>
</comment>
<comment type="interaction">
    <interactant intactId="EBI-741602">
        <id>O94972</id>
    </interactant>
    <interactant intactId="EBI-10192902">
        <id>O95990-3</id>
        <label>FAM107A</label>
    </interactant>
    <organismsDiffer>false</organismsDiffer>
    <experiments>3</experiments>
</comment>
<comment type="interaction">
    <interactant intactId="EBI-741602">
        <id>O94972</id>
    </interactant>
    <interactant intactId="EBI-719941">
        <id>Q3B820</id>
        <label>FAM161A</label>
    </interactant>
    <organismsDiffer>false</organismsDiffer>
    <experiments>3</experiments>
</comment>
<comment type="interaction">
    <interactant intactId="EBI-741602">
        <id>O94972</id>
    </interactant>
    <interactant intactId="EBI-742802">
        <id>Q9Y247</id>
        <label>FAM50B</label>
    </interactant>
    <organismsDiffer>false</organismsDiffer>
    <experiments>3</experiments>
</comment>
<comment type="interaction">
    <interactant intactId="EBI-741602">
        <id>O94972</id>
    </interactant>
    <interactant intactId="EBI-399080">
        <id>Q92993</id>
        <label>KAT5</label>
    </interactant>
    <organismsDiffer>false</organismsDiffer>
    <experiments>3</experiments>
</comment>
<comment type="interaction">
    <interactant intactId="EBI-741602">
        <id>O94972</id>
    </interactant>
    <interactant intactId="EBI-348259">
        <id>Q96EZ8</id>
        <label>MCRS1</label>
    </interactant>
    <organismsDiffer>false</organismsDiffer>
    <experiments>4</experiments>
</comment>
<comment type="interaction">
    <interactant intactId="EBI-741602">
        <id>O94972</id>
    </interactant>
    <interactant intactId="EBI-1045072">
        <id>Q96T60</id>
        <label>PNKP</label>
    </interactant>
    <organismsDiffer>false</organismsDiffer>
    <experiments>6</experiments>
</comment>
<comment type="interaction">
    <interactant intactId="EBI-741602">
        <id>O94972</id>
    </interactant>
    <interactant intactId="EBI-741137">
        <id>O43663</id>
        <label>PRC1</label>
    </interactant>
    <organismsDiffer>false</organismsDiffer>
    <experiments>3</experiments>
</comment>
<comment type="interaction">
    <interactant intactId="EBI-741602">
        <id>O94972</id>
    </interactant>
    <interactant intactId="EBI-740818">
        <id>Q9Y272</id>
        <label>RASD1</label>
    </interactant>
    <organismsDiffer>false</organismsDiffer>
    <experiments>3</experiments>
</comment>
<comment type="interaction">
    <interactant intactId="EBI-741602">
        <id>O94972</id>
    </interactant>
    <interactant intactId="EBI-16428950">
        <id>A0A0S2Z4G9</id>
        <label>RNF6</label>
    </interactant>
    <organismsDiffer>false</organismsDiffer>
    <experiments>3</experiments>
</comment>
<comment type="interaction">
    <interactant intactId="EBI-741602">
        <id>O94972</id>
    </interactant>
    <interactant intactId="EBI-358122">
        <id>P32969</id>
        <label>RPL9P9</label>
    </interactant>
    <organismsDiffer>false</organismsDiffer>
    <experiments>3</experiments>
</comment>
<comment type="interaction">
    <interactant intactId="EBI-741602">
        <id>O94972</id>
    </interactant>
    <interactant intactId="EBI-16429492">
        <id>P28702-3</id>
        <label>RXRB</label>
    </interactant>
    <organismsDiffer>false</organismsDiffer>
    <experiments>3</experiments>
</comment>
<comment type="interaction">
    <interactant intactId="EBI-741602">
        <id>O94972</id>
    </interactant>
    <interactant intactId="EBI-748391">
        <id>Q9BWG6</id>
        <label>SCNM1</label>
    </interactant>
    <organismsDiffer>false</organismsDiffer>
    <experiments>3</experiments>
</comment>
<comment type="interaction">
    <interactant intactId="EBI-741602">
        <id>O94972</id>
    </interactant>
    <interactant intactId="EBI-2212028">
        <id>Q9Y2D8</id>
        <label>SSX2IP</label>
    </interactant>
    <organismsDiffer>false</organismsDiffer>
    <experiments>4</experiments>
</comment>
<comment type="interaction">
    <interactant intactId="EBI-741602">
        <id>O94972</id>
    </interactant>
    <interactant intactId="EBI-747142">
        <id>Q96C24</id>
        <label>SYTL4</label>
    </interactant>
    <organismsDiffer>false</organismsDiffer>
    <experiments>3</experiments>
</comment>
<comment type="interaction">
    <interactant intactId="EBI-741602">
        <id>O94972</id>
    </interactant>
    <interactant intactId="EBI-11955057">
        <id>Q8N8B7-2</id>
        <label>TCEANC</label>
    </interactant>
    <organismsDiffer>false</organismsDiffer>
    <experiments>3</experiments>
</comment>
<comment type="interaction">
    <interactant intactId="EBI-741602">
        <id>O94972</id>
    </interactant>
    <interactant intactId="EBI-2105393">
        <id>P57075</id>
        <label>UBASH3A</label>
    </interactant>
    <organismsDiffer>false</organismsDiffer>
    <experiments>3</experiments>
</comment>
<comment type="interaction">
    <interactant intactId="EBI-741602">
        <id>O94972</id>
    </interactant>
    <interactant intactId="EBI-744471">
        <id>O43167</id>
        <label>ZBTB24</label>
    </interactant>
    <organismsDiffer>false</organismsDiffer>
    <experiments>3</experiments>
</comment>
<comment type="interaction">
    <interactant intactId="EBI-741602">
        <id>O94972</id>
    </interactant>
    <interactant intactId="EBI-2682299">
        <id>Q96NC0</id>
        <label>ZMAT2</label>
    </interactant>
    <organismsDiffer>false</organismsDiffer>
    <experiments>3</experiments>
</comment>
<comment type="interaction">
    <interactant intactId="EBI-741602">
        <id>O94972</id>
    </interactant>
    <interactant intactId="EBI-7233259">
        <id>Q86UD4</id>
        <label>ZNF329</label>
    </interactant>
    <organismsDiffer>false</organismsDiffer>
    <experiments>3</experiments>
</comment>
<comment type="interaction">
    <interactant intactId="EBI-741602">
        <id>O94972</id>
    </interactant>
    <interactant intactId="EBI-740727">
        <id>Q8TAU3</id>
        <label>ZNF417</label>
    </interactant>
    <organismsDiffer>false</organismsDiffer>
    <experiments>4</experiments>
</comment>
<comment type="interaction">
    <interactant intactId="EBI-741602">
        <id>O94972</id>
    </interactant>
    <interactant intactId="EBI-6427977">
        <id>Q96SQ5</id>
        <label>ZNF587</label>
    </interactant>
    <organismsDiffer>false</organismsDiffer>
    <experiments>3</experiments>
</comment>
<comment type="interaction">
    <interactant intactId="EBI-741602">
        <id>O94972</id>
    </interactant>
    <interactant intactId="EBI-10174671">
        <id>A8K932</id>
    </interactant>
    <organismsDiffer>false</organismsDiffer>
    <experiments>3</experiments>
</comment>
<comment type="subcellular location">
    <subcellularLocation>
        <location evidence="19">Chromosome</location>
    </subcellularLocation>
    <subcellularLocation>
        <location evidence="11">Cytoplasm</location>
        <location evidence="11">Perinuclear region</location>
    </subcellularLocation>
    <subcellularLocation>
        <location evidence="7 21">Peroxisome membrane</location>
        <topology evidence="21">Peripheral membrane protein</topology>
    </subcellularLocation>
    <text evidence="11">Found in vesicles of the peroxisome. Aggregates as aggresomes, a perinuclear region where certain misfolded or aggregated proteins are sequestered for proteasomal degradation.</text>
</comment>
<comment type="alternative products">
    <event type="alternative splicing"/>
    <isoform>
        <id>O94972-1</id>
        <name>1</name>
        <name evidence="24">TRIM37a</name>
        <name evidence="24">TRIM37b</name>
        <sequence type="displayed"/>
    </isoform>
    <isoform>
        <id>O94972-2</id>
        <name>2</name>
        <sequence type="described" ref="VSP_011919 VSP_011920"/>
    </isoform>
    <isoform>
        <id>O94972-3</id>
        <name>3</name>
        <sequence type="described" ref="VSP_057468"/>
    </isoform>
</comment>
<comment type="tissue specificity">
    <text evidence="6 12">Ubiquitous (PubMed:10888877). Highly expressed in testis, while it is weakly expressed in other tissues (PubMed:16310976).</text>
</comment>
<comment type="induction">
    <text evidence="19">Overexpressed in a number of breast cancer cell lines.</text>
</comment>
<comment type="PTM">
    <text evidence="11">Auto-ubiquitinated.</text>
</comment>
<comment type="disease" evidence="6 8 9 11 13 14 15 16">
    <disease id="DI-02001">
        <name>Mulibrey nanism</name>
        <acronym>MUL</acronym>
        <description>An autosomal recessive growth disorder characterized by severe growth failure of prenatal onset, constrictive pericardium and progressive cardiomyopathy, facial dysmorphism, and failure of sexual maturation. Additional clinical features include hepatomegaly, muscle hypotonia, J-shaped sella turcica, yellowish dots in the ocular fundi, hypoplasia of various endocrine glands, insulin resistance with type 2 diabetes, and an increased risk for Wilms' tumor.</description>
        <dbReference type="MIM" id="253250"/>
    </disease>
    <text>The disease is caused by variants affecting the gene represented in this entry.</text>
</comment>
<comment type="miscellaneous">
    <text evidence="19">Acts as a proto-oncogene via its ability to monoubiquinate 'Lys-119' of histone H2A (H2AK119Ub): overexpressed in a number of breast cancers and promotes transformation of cells by mediating silencing of tumor suppressor genes (PubMed:25470042).</text>
</comment>
<comment type="similarity">
    <text evidence="27">Belongs to the TRIM/RBCC family.</text>
</comment>
<comment type="sequence caution" evidence="27">
    <conflict type="erroneous initiation">
        <sequence resource="EMBL-CDS" id="BAA74921"/>
    </conflict>
</comment>
<comment type="online information" name="Atlas of Genetics and Cytogenetics in Oncology and Haematology">
    <link uri="https://atlasgeneticsoncology.org/gene/42703/TRIM37"/>
</comment>
<name>TRI37_HUMAN</name>